<protein>
    <recommendedName>
        <fullName>Putative serine/threonine-protein phosphatase 4 regulatory subunit 1-like</fullName>
    </recommendedName>
</protein>
<accession>Q9P1A2</accession>
<accession>B4DRM4</accession>
<accession>Q96LY6</accession>
<accession>Q9BZ17</accession>
<accession>Q9BZ18</accession>
<organism>
    <name type="scientific">Homo sapiens</name>
    <name type="common">Human</name>
    <dbReference type="NCBI Taxonomy" id="9606"/>
    <lineage>
        <taxon>Eukaryota</taxon>
        <taxon>Metazoa</taxon>
        <taxon>Chordata</taxon>
        <taxon>Craniata</taxon>
        <taxon>Vertebrata</taxon>
        <taxon>Euteleostomi</taxon>
        <taxon>Mammalia</taxon>
        <taxon>Eutheria</taxon>
        <taxon>Euarchontoglires</taxon>
        <taxon>Primates</taxon>
        <taxon>Haplorrhini</taxon>
        <taxon>Catarrhini</taxon>
        <taxon>Hominidae</taxon>
        <taxon>Homo</taxon>
    </lineage>
</organism>
<name>PP4RL_HUMAN</name>
<evidence type="ECO:0000256" key="1">
    <source>
        <dbReference type="SAM" id="MobiDB-lite"/>
    </source>
</evidence>
<evidence type="ECO:0000303" key="2">
    <source>
    </source>
</evidence>
<evidence type="ECO:0000305" key="3"/>
<comment type="function">
    <text>May be a regulatory subunit of serine/threonine-protein phosphatase 4.</text>
</comment>
<comment type="alternative products">
    <event type="alternative splicing"/>
    <isoform>
        <id>Q9P1A2-1</id>
        <name>1</name>
        <sequence type="displayed"/>
    </isoform>
    <isoform>
        <id>Q9P1A2-3</id>
        <name>2</name>
        <sequence type="described" ref="VSP_056120"/>
    </isoform>
</comment>
<comment type="caution">
    <text evidence="3">Could be the product of a pseudogene.</text>
</comment>
<comment type="sequence caution" evidence="3">
    <conflict type="miscellaneous discrepancy">
        <sequence resource="EMBL-CDS" id="AAF69597"/>
    </conflict>
    <text>Wrong choice of frame.</text>
</comment>
<dbReference type="EMBL" id="AK057583">
    <property type="protein sequence ID" value="BAB71529.1"/>
    <property type="molecule type" value="mRNA"/>
</dbReference>
<dbReference type="EMBL" id="AK299330">
    <property type="protein sequence ID" value="BAG61336.1"/>
    <property type="molecule type" value="mRNA"/>
</dbReference>
<dbReference type="EMBL" id="AL035455">
    <property type="status" value="NOT_ANNOTATED_CDS"/>
    <property type="molecule type" value="Genomic_DNA"/>
</dbReference>
<dbReference type="EMBL" id="AL354776">
    <property type="status" value="NOT_ANNOTATED_CDS"/>
    <property type="molecule type" value="Genomic_DNA"/>
</dbReference>
<dbReference type="EMBL" id="AL354834">
    <property type="status" value="NOT_ANNOTATED_CDS"/>
    <property type="molecule type" value="Genomic_DNA"/>
</dbReference>
<dbReference type="EMBL" id="AF119843">
    <property type="protein sequence ID" value="AAF69597.1"/>
    <property type="status" value="ALT_SEQ"/>
    <property type="molecule type" value="mRNA"/>
</dbReference>
<dbReference type="SMR" id="Q9P1A2"/>
<dbReference type="IntAct" id="Q9P1A2">
    <property type="interactions" value="87"/>
</dbReference>
<dbReference type="MINT" id="Q9P1A2"/>
<dbReference type="iPTMnet" id="Q9P1A2"/>
<dbReference type="PhosphoSitePlus" id="Q9P1A2"/>
<dbReference type="BioMuta" id="HGNC:15755"/>
<dbReference type="DMDM" id="374095492"/>
<dbReference type="jPOST" id="Q9P1A2"/>
<dbReference type="MassIVE" id="Q9P1A2"/>
<dbReference type="PeptideAtlas" id="Q9P1A2"/>
<dbReference type="ProteomicsDB" id="77269"/>
<dbReference type="ProteomicsDB" id="83640">
    <molecule id="Q9P1A2-1"/>
</dbReference>
<dbReference type="AGR" id="HGNC:15755"/>
<dbReference type="GeneCards" id="PPP4R1L"/>
<dbReference type="HGNC" id="HGNC:15755">
    <property type="gene designation" value="PPP4R1L"/>
</dbReference>
<dbReference type="neXtProt" id="NX_Q9P1A2"/>
<dbReference type="InParanoid" id="Q9P1A2"/>
<dbReference type="PAN-GO" id="Q9P1A2">
    <property type="GO annotations" value="2 GO annotations based on evolutionary models"/>
</dbReference>
<dbReference type="PhylomeDB" id="Q9P1A2"/>
<dbReference type="TreeFam" id="TF105560"/>
<dbReference type="PathwayCommons" id="Q9P1A2"/>
<dbReference type="ChiTaRS" id="PPP4R1L">
    <property type="organism name" value="human"/>
</dbReference>
<dbReference type="Pharos" id="Q9P1A2">
    <property type="development level" value="Tdark"/>
</dbReference>
<dbReference type="PRO" id="PR:Q9P1A2"/>
<dbReference type="Proteomes" id="UP000005640">
    <property type="component" value="Unplaced"/>
</dbReference>
<dbReference type="RNAct" id="Q9P1A2">
    <property type="molecule type" value="protein"/>
</dbReference>
<dbReference type="FunFam" id="1.25.10.10:FF:000358">
    <property type="entry name" value="Serine/threonine-protein phosphatase 4 regulatory subunit 1"/>
    <property type="match status" value="1"/>
</dbReference>
<dbReference type="Gene3D" id="1.25.10.10">
    <property type="entry name" value="Leucine-rich Repeat Variant"/>
    <property type="match status" value="1"/>
</dbReference>
<dbReference type="InterPro" id="IPR011989">
    <property type="entry name" value="ARM-like"/>
</dbReference>
<dbReference type="InterPro" id="IPR016024">
    <property type="entry name" value="ARM-type_fold"/>
</dbReference>
<dbReference type="InterPro" id="IPR021133">
    <property type="entry name" value="HEAT_type_2"/>
</dbReference>
<dbReference type="InterPro" id="IPR051023">
    <property type="entry name" value="PP2A_Regulatory_Subunit_A"/>
</dbReference>
<dbReference type="PANTHER" id="PTHR10648">
    <property type="entry name" value="SERINE/THREONINE-PROTEIN PHOSPHATASE PP2A 65 KDA REGULATORY SUBUNIT"/>
    <property type="match status" value="1"/>
</dbReference>
<dbReference type="PANTHER" id="PTHR10648:SF7">
    <property type="entry name" value="WW-BINDING DOMAIN-CONTAINING PROTEIN-RELATED"/>
    <property type="match status" value="1"/>
</dbReference>
<dbReference type="SUPFAM" id="SSF48371">
    <property type="entry name" value="ARM repeat"/>
    <property type="match status" value="1"/>
</dbReference>
<dbReference type="PROSITE" id="PS50077">
    <property type="entry name" value="HEAT_REPEAT"/>
    <property type="match status" value="1"/>
</dbReference>
<reference key="1">
    <citation type="journal article" date="2004" name="Nat. Genet.">
        <title>Complete sequencing and characterization of 21,243 full-length human cDNAs.</title>
        <authorList>
            <person name="Ota T."/>
            <person name="Suzuki Y."/>
            <person name="Nishikawa T."/>
            <person name="Otsuki T."/>
            <person name="Sugiyama T."/>
            <person name="Irie R."/>
            <person name="Wakamatsu A."/>
            <person name="Hayashi K."/>
            <person name="Sato H."/>
            <person name="Nagai K."/>
            <person name="Kimura K."/>
            <person name="Makita H."/>
            <person name="Sekine M."/>
            <person name="Obayashi M."/>
            <person name="Nishi T."/>
            <person name="Shibahara T."/>
            <person name="Tanaka T."/>
            <person name="Ishii S."/>
            <person name="Yamamoto J."/>
            <person name="Saito K."/>
            <person name="Kawai Y."/>
            <person name="Isono Y."/>
            <person name="Nakamura Y."/>
            <person name="Nagahari K."/>
            <person name="Murakami K."/>
            <person name="Yasuda T."/>
            <person name="Iwayanagi T."/>
            <person name="Wagatsuma M."/>
            <person name="Shiratori A."/>
            <person name="Sudo H."/>
            <person name="Hosoiri T."/>
            <person name="Kaku Y."/>
            <person name="Kodaira H."/>
            <person name="Kondo H."/>
            <person name="Sugawara M."/>
            <person name="Takahashi M."/>
            <person name="Kanda K."/>
            <person name="Yokoi T."/>
            <person name="Furuya T."/>
            <person name="Kikkawa E."/>
            <person name="Omura Y."/>
            <person name="Abe K."/>
            <person name="Kamihara K."/>
            <person name="Katsuta N."/>
            <person name="Sato K."/>
            <person name="Tanikawa M."/>
            <person name="Yamazaki M."/>
            <person name="Ninomiya K."/>
            <person name="Ishibashi T."/>
            <person name="Yamashita H."/>
            <person name="Murakawa K."/>
            <person name="Fujimori K."/>
            <person name="Tanai H."/>
            <person name="Kimata M."/>
            <person name="Watanabe M."/>
            <person name="Hiraoka S."/>
            <person name="Chiba Y."/>
            <person name="Ishida S."/>
            <person name="Ono Y."/>
            <person name="Takiguchi S."/>
            <person name="Watanabe S."/>
            <person name="Yosida M."/>
            <person name="Hotuta T."/>
            <person name="Kusano J."/>
            <person name="Kanehori K."/>
            <person name="Takahashi-Fujii A."/>
            <person name="Hara H."/>
            <person name="Tanase T.-O."/>
            <person name="Nomura Y."/>
            <person name="Togiya S."/>
            <person name="Komai F."/>
            <person name="Hara R."/>
            <person name="Takeuchi K."/>
            <person name="Arita M."/>
            <person name="Imose N."/>
            <person name="Musashino K."/>
            <person name="Yuuki H."/>
            <person name="Oshima A."/>
            <person name="Sasaki N."/>
            <person name="Aotsuka S."/>
            <person name="Yoshikawa Y."/>
            <person name="Matsunawa H."/>
            <person name="Ichihara T."/>
            <person name="Shiohata N."/>
            <person name="Sano S."/>
            <person name="Moriya S."/>
            <person name="Momiyama H."/>
            <person name="Satoh N."/>
            <person name="Takami S."/>
            <person name="Terashima Y."/>
            <person name="Suzuki O."/>
            <person name="Nakagawa S."/>
            <person name="Senoh A."/>
            <person name="Mizoguchi H."/>
            <person name="Goto Y."/>
            <person name="Shimizu F."/>
            <person name="Wakebe H."/>
            <person name="Hishigaki H."/>
            <person name="Watanabe T."/>
            <person name="Sugiyama A."/>
            <person name="Takemoto M."/>
            <person name="Kawakami B."/>
            <person name="Yamazaki M."/>
            <person name="Watanabe K."/>
            <person name="Kumagai A."/>
            <person name="Itakura S."/>
            <person name="Fukuzumi Y."/>
            <person name="Fujimori Y."/>
            <person name="Komiyama M."/>
            <person name="Tashiro H."/>
            <person name="Tanigami A."/>
            <person name="Fujiwara T."/>
            <person name="Ono T."/>
            <person name="Yamada K."/>
            <person name="Fujii Y."/>
            <person name="Ozaki K."/>
            <person name="Hirao M."/>
            <person name="Ohmori Y."/>
            <person name="Kawabata A."/>
            <person name="Hikiji T."/>
            <person name="Kobatake N."/>
            <person name="Inagaki H."/>
            <person name="Ikema Y."/>
            <person name="Okamoto S."/>
            <person name="Okitani R."/>
            <person name="Kawakami T."/>
            <person name="Noguchi S."/>
            <person name="Itoh T."/>
            <person name="Shigeta K."/>
            <person name="Senba T."/>
            <person name="Matsumura K."/>
            <person name="Nakajima Y."/>
            <person name="Mizuno T."/>
            <person name="Morinaga M."/>
            <person name="Sasaki M."/>
            <person name="Togashi T."/>
            <person name="Oyama M."/>
            <person name="Hata H."/>
            <person name="Watanabe M."/>
            <person name="Komatsu T."/>
            <person name="Mizushima-Sugano J."/>
            <person name="Satoh T."/>
            <person name="Shirai Y."/>
            <person name="Takahashi Y."/>
            <person name="Nakagawa K."/>
            <person name="Okumura K."/>
            <person name="Nagase T."/>
            <person name="Nomura N."/>
            <person name="Kikuchi H."/>
            <person name="Masuho Y."/>
            <person name="Yamashita R."/>
            <person name="Nakai K."/>
            <person name="Yada T."/>
            <person name="Nakamura Y."/>
            <person name="Ohara O."/>
            <person name="Isogai T."/>
            <person name="Sugano S."/>
        </authorList>
    </citation>
    <scope>NUCLEOTIDE SEQUENCE [LARGE SCALE MRNA] (ISOFORMS 1 AND 2)</scope>
    <source>
        <tissue>Thymus</tissue>
    </source>
</reference>
<reference key="2">
    <citation type="journal article" date="2001" name="Nature">
        <title>The DNA sequence and comparative analysis of human chromosome 20.</title>
        <authorList>
            <person name="Deloukas P."/>
            <person name="Matthews L.H."/>
            <person name="Ashurst J.L."/>
            <person name="Burton J."/>
            <person name="Gilbert J.G.R."/>
            <person name="Jones M."/>
            <person name="Stavrides G."/>
            <person name="Almeida J.P."/>
            <person name="Babbage A.K."/>
            <person name="Bagguley C.L."/>
            <person name="Bailey J."/>
            <person name="Barlow K.F."/>
            <person name="Bates K.N."/>
            <person name="Beard L.M."/>
            <person name="Beare D.M."/>
            <person name="Beasley O.P."/>
            <person name="Bird C.P."/>
            <person name="Blakey S.E."/>
            <person name="Bridgeman A.M."/>
            <person name="Brown A.J."/>
            <person name="Buck D."/>
            <person name="Burrill W.D."/>
            <person name="Butler A.P."/>
            <person name="Carder C."/>
            <person name="Carter N.P."/>
            <person name="Chapman J.C."/>
            <person name="Clamp M."/>
            <person name="Clark G."/>
            <person name="Clark L.N."/>
            <person name="Clark S.Y."/>
            <person name="Clee C.M."/>
            <person name="Clegg S."/>
            <person name="Cobley V.E."/>
            <person name="Collier R.E."/>
            <person name="Connor R.E."/>
            <person name="Corby N.R."/>
            <person name="Coulson A."/>
            <person name="Coville G.J."/>
            <person name="Deadman R."/>
            <person name="Dhami P.D."/>
            <person name="Dunn M."/>
            <person name="Ellington A.G."/>
            <person name="Frankland J.A."/>
            <person name="Fraser A."/>
            <person name="French L."/>
            <person name="Garner P."/>
            <person name="Grafham D.V."/>
            <person name="Griffiths C."/>
            <person name="Griffiths M.N.D."/>
            <person name="Gwilliam R."/>
            <person name="Hall R.E."/>
            <person name="Hammond S."/>
            <person name="Harley J.L."/>
            <person name="Heath P.D."/>
            <person name="Ho S."/>
            <person name="Holden J.L."/>
            <person name="Howden P.J."/>
            <person name="Huckle E."/>
            <person name="Hunt A.R."/>
            <person name="Hunt S.E."/>
            <person name="Jekosch K."/>
            <person name="Johnson C.M."/>
            <person name="Johnson D."/>
            <person name="Kay M.P."/>
            <person name="Kimberley A.M."/>
            <person name="King A."/>
            <person name="Knights A."/>
            <person name="Laird G.K."/>
            <person name="Lawlor S."/>
            <person name="Lehvaeslaiho M.H."/>
            <person name="Leversha M.A."/>
            <person name="Lloyd C."/>
            <person name="Lloyd D.M."/>
            <person name="Lovell J.D."/>
            <person name="Marsh V.L."/>
            <person name="Martin S.L."/>
            <person name="McConnachie L.J."/>
            <person name="McLay K."/>
            <person name="McMurray A.A."/>
            <person name="Milne S.A."/>
            <person name="Mistry D."/>
            <person name="Moore M.J.F."/>
            <person name="Mullikin J.C."/>
            <person name="Nickerson T."/>
            <person name="Oliver K."/>
            <person name="Parker A."/>
            <person name="Patel R."/>
            <person name="Pearce T.A.V."/>
            <person name="Peck A.I."/>
            <person name="Phillimore B.J.C.T."/>
            <person name="Prathalingam S.R."/>
            <person name="Plumb R.W."/>
            <person name="Ramsay H."/>
            <person name="Rice C.M."/>
            <person name="Ross M.T."/>
            <person name="Scott C.E."/>
            <person name="Sehra H.K."/>
            <person name="Shownkeen R."/>
            <person name="Sims S."/>
            <person name="Skuce C.D."/>
            <person name="Smith M.L."/>
            <person name="Soderlund C."/>
            <person name="Steward C.A."/>
            <person name="Sulston J.E."/>
            <person name="Swann R.M."/>
            <person name="Sycamore N."/>
            <person name="Taylor R."/>
            <person name="Tee L."/>
            <person name="Thomas D.W."/>
            <person name="Thorpe A."/>
            <person name="Tracey A."/>
            <person name="Tromans A.C."/>
            <person name="Vaudin M."/>
            <person name="Wall M."/>
            <person name="Wallis J.M."/>
            <person name="Whitehead S.L."/>
            <person name="Whittaker P."/>
            <person name="Willey D.L."/>
            <person name="Williams L."/>
            <person name="Williams S.A."/>
            <person name="Wilming L."/>
            <person name="Wray P.W."/>
            <person name="Hubbard T."/>
            <person name="Durbin R.M."/>
            <person name="Bentley D.R."/>
            <person name="Beck S."/>
            <person name="Rogers J."/>
        </authorList>
    </citation>
    <scope>NUCLEOTIDE SEQUENCE [LARGE SCALE GENOMIC DNA]</scope>
</reference>
<reference key="3">
    <citation type="submission" date="1999-01" db="EMBL/GenBank/DDBJ databases">
        <title>Functional prediction of the coding sequences of 79 new genes deduced by analysis of cDNA clones from human fetal liver.</title>
        <authorList>
            <person name="Zhang C."/>
            <person name="Yu Y."/>
            <person name="Zhang S."/>
            <person name="Wei H."/>
            <person name="Zhang Y."/>
            <person name="Zhou G."/>
            <person name="Bi J."/>
            <person name="Liu M."/>
            <person name="He F."/>
        </authorList>
    </citation>
    <scope>NUCLEOTIDE SEQUENCE [LARGE SCALE MRNA] OF 325-415 (ISOFORM 1)</scope>
    <source>
        <tissue>Fetal liver</tissue>
    </source>
</reference>
<gene>
    <name type="primary">PPP4R1L</name>
    <name type="synonym">C20orf192</name>
    <name type="ORF">PRO1085</name>
</gene>
<proteinExistence type="uncertain"/>
<keyword id="KW-0025">Alternative splicing</keyword>
<keyword id="KW-1267">Proteomics identification</keyword>
<keyword id="KW-1185">Reference proteome</keyword>
<keyword id="KW-0677">Repeat</keyword>
<feature type="chain" id="PRO_0000071530" description="Putative serine/threonine-protein phosphatase 4 regulatory subunit 1-like">
    <location>
        <begin position="1"/>
        <end position="415"/>
    </location>
</feature>
<feature type="repeat" description="HEAT 1">
    <location>
        <begin position="86"/>
        <end position="124"/>
    </location>
</feature>
<feature type="repeat" description="HEAT 2">
    <location>
        <begin position="163"/>
        <end position="202"/>
    </location>
</feature>
<feature type="repeat" description="HEAT 3">
    <location>
        <begin position="203"/>
        <end position="241"/>
    </location>
</feature>
<feature type="repeat" description="HEAT 4">
    <location>
        <begin position="242"/>
        <end position="280"/>
    </location>
</feature>
<feature type="region of interest" description="Disordered" evidence="1">
    <location>
        <begin position="301"/>
        <end position="362"/>
    </location>
</feature>
<feature type="compositionally biased region" description="Low complexity" evidence="1">
    <location>
        <begin position="301"/>
        <end position="318"/>
    </location>
</feature>
<feature type="splice variant" id="VSP_056120" description="In isoform 2." evidence="2">
    <location>
        <begin position="2"/>
        <end position="144"/>
    </location>
</feature>
<sequence>MAEIPLYFVDLQDDLDDYGFEDYGTDCDNMRVTAFLDIPGQDNLPPLTRLEKYAFSENTFNRQIIARGLLDIFRDFGNNEEDFLTVMEIVVRLSEDAEPTVRTELMEQIPPIAIFLQENRSNFPVVLSEYLIPIVVRYLTDPNNQIICKMASMLSKSTVERLLLPRFCELCGDRKLFQVRKVCAANFGDICHAVGQEATEKFLIPKFFELCSDAVWGMRKACAECFTAVSHSSSPGVRRTQLFPLFIRLVSDPCRWVHQAAFQSLGPFTSTFANPSRAGLYLREDGALSIWPLTQDLDSGFASGSPAPSSGGNTSPASLTRSAKPVRSEPELPVEGTSAKTSDCPHSSSSSDGPAESPVESCVSAGAEWTRVSPETSACSKLSDMNDLPISSYPGSDSWACPGNTEDVFSHFLYW</sequence>